<keyword id="KW-0025">Alternative splicing</keyword>
<keyword id="KW-0391">Immunity</keyword>
<keyword id="KW-0399">Innate immunity</keyword>
<keyword id="KW-0597">Phosphoprotein</keyword>
<keyword id="KW-1267">Proteomics identification</keyword>
<keyword id="KW-1185">Reference proteome</keyword>
<keyword id="KW-0808">Transferase</keyword>
<keyword id="KW-0833">Ubl conjugation pathway</keyword>
<name>PELI3_HUMAN</name>
<gene>
    <name evidence="10" type="primary">PELI3</name>
</gene>
<organism>
    <name type="scientific">Homo sapiens</name>
    <name type="common">Human</name>
    <dbReference type="NCBI Taxonomy" id="9606"/>
    <lineage>
        <taxon>Eukaryota</taxon>
        <taxon>Metazoa</taxon>
        <taxon>Chordata</taxon>
        <taxon>Craniata</taxon>
        <taxon>Vertebrata</taxon>
        <taxon>Euteleostomi</taxon>
        <taxon>Mammalia</taxon>
        <taxon>Eutheria</taxon>
        <taxon>Euarchontoglires</taxon>
        <taxon>Primates</taxon>
        <taxon>Haplorrhini</taxon>
        <taxon>Catarrhini</taxon>
        <taxon>Hominidae</taxon>
        <taxon>Homo</taxon>
    </lineage>
</organism>
<reference key="1">
    <citation type="journal article" date="2003" name="J. Immunol.">
        <title>Pellino3, a novel member of the Pellino protein family, promotes activation of c-Jun and Elk-1 and may act as a scaffolding protein.</title>
        <authorList>
            <person name="Jensen L.E."/>
            <person name="Whitehead A.S."/>
        </authorList>
    </citation>
    <scope>NUCLEOTIDE SEQUENCE [MRNA] (ISOFORMS 1 AND 2)</scope>
    <scope>FUNCTION</scope>
    <scope>CATALYTIC ACTIVITY</scope>
    <scope>PATHWAY</scope>
    <scope>TISSUE SPECIFICITY</scope>
    <scope>INTERACTION WITH TRAF6; MAP3K7 AND MAP3K14</scope>
</reference>
<reference key="2">
    <citation type="journal article" date="2004" name="Nat. Genet.">
        <title>Complete sequencing and characterization of 21,243 full-length human cDNAs.</title>
        <authorList>
            <person name="Ota T."/>
            <person name="Suzuki Y."/>
            <person name="Nishikawa T."/>
            <person name="Otsuki T."/>
            <person name="Sugiyama T."/>
            <person name="Irie R."/>
            <person name="Wakamatsu A."/>
            <person name="Hayashi K."/>
            <person name="Sato H."/>
            <person name="Nagai K."/>
            <person name="Kimura K."/>
            <person name="Makita H."/>
            <person name="Sekine M."/>
            <person name="Obayashi M."/>
            <person name="Nishi T."/>
            <person name="Shibahara T."/>
            <person name="Tanaka T."/>
            <person name="Ishii S."/>
            <person name="Yamamoto J."/>
            <person name="Saito K."/>
            <person name="Kawai Y."/>
            <person name="Isono Y."/>
            <person name="Nakamura Y."/>
            <person name="Nagahari K."/>
            <person name="Murakami K."/>
            <person name="Yasuda T."/>
            <person name="Iwayanagi T."/>
            <person name="Wagatsuma M."/>
            <person name="Shiratori A."/>
            <person name="Sudo H."/>
            <person name="Hosoiri T."/>
            <person name="Kaku Y."/>
            <person name="Kodaira H."/>
            <person name="Kondo H."/>
            <person name="Sugawara M."/>
            <person name="Takahashi M."/>
            <person name="Kanda K."/>
            <person name="Yokoi T."/>
            <person name="Furuya T."/>
            <person name="Kikkawa E."/>
            <person name="Omura Y."/>
            <person name="Abe K."/>
            <person name="Kamihara K."/>
            <person name="Katsuta N."/>
            <person name="Sato K."/>
            <person name="Tanikawa M."/>
            <person name="Yamazaki M."/>
            <person name="Ninomiya K."/>
            <person name="Ishibashi T."/>
            <person name="Yamashita H."/>
            <person name="Murakawa K."/>
            <person name="Fujimori K."/>
            <person name="Tanai H."/>
            <person name="Kimata M."/>
            <person name="Watanabe M."/>
            <person name="Hiraoka S."/>
            <person name="Chiba Y."/>
            <person name="Ishida S."/>
            <person name="Ono Y."/>
            <person name="Takiguchi S."/>
            <person name="Watanabe S."/>
            <person name="Yosida M."/>
            <person name="Hotuta T."/>
            <person name="Kusano J."/>
            <person name="Kanehori K."/>
            <person name="Takahashi-Fujii A."/>
            <person name="Hara H."/>
            <person name="Tanase T.-O."/>
            <person name="Nomura Y."/>
            <person name="Togiya S."/>
            <person name="Komai F."/>
            <person name="Hara R."/>
            <person name="Takeuchi K."/>
            <person name="Arita M."/>
            <person name="Imose N."/>
            <person name="Musashino K."/>
            <person name="Yuuki H."/>
            <person name="Oshima A."/>
            <person name="Sasaki N."/>
            <person name="Aotsuka S."/>
            <person name="Yoshikawa Y."/>
            <person name="Matsunawa H."/>
            <person name="Ichihara T."/>
            <person name="Shiohata N."/>
            <person name="Sano S."/>
            <person name="Moriya S."/>
            <person name="Momiyama H."/>
            <person name="Satoh N."/>
            <person name="Takami S."/>
            <person name="Terashima Y."/>
            <person name="Suzuki O."/>
            <person name="Nakagawa S."/>
            <person name="Senoh A."/>
            <person name="Mizoguchi H."/>
            <person name="Goto Y."/>
            <person name="Shimizu F."/>
            <person name="Wakebe H."/>
            <person name="Hishigaki H."/>
            <person name="Watanabe T."/>
            <person name="Sugiyama A."/>
            <person name="Takemoto M."/>
            <person name="Kawakami B."/>
            <person name="Yamazaki M."/>
            <person name="Watanabe K."/>
            <person name="Kumagai A."/>
            <person name="Itakura S."/>
            <person name="Fukuzumi Y."/>
            <person name="Fujimori Y."/>
            <person name="Komiyama M."/>
            <person name="Tashiro H."/>
            <person name="Tanigami A."/>
            <person name="Fujiwara T."/>
            <person name="Ono T."/>
            <person name="Yamada K."/>
            <person name="Fujii Y."/>
            <person name="Ozaki K."/>
            <person name="Hirao M."/>
            <person name="Ohmori Y."/>
            <person name="Kawabata A."/>
            <person name="Hikiji T."/>
            <person name="Kobatake N."/>
            <person name="Inagaki H."/>
            <person name="Ikema Y."/>
            <person name="Okamoto S."/>
            <person name="Okitani R."/>
            <person name="Kawakami T."/>
            <person name="Noguchi S."/>
            <person name="Itoh T."/>
            <person name="Shigeta K."/>
            <person name="Senba T."/>
            <person name="Matsumura K."/>
            <person name="Nakajima Y."/>
            <person name="Mizuno T."/>
            <person name="Morinaga M."/>
            <person name="Sasaki M."/>
            <person name="Togashi T."/>
            <person name="Oyama M."/>
            <person name="Hata H."/>
            <person name="Watanabe M."/>
            <person name="Komatsu T."/>
            <person name="Mizushima-Sugano J."/>
            <person name="Satoh T."/>
            <person name="Shirai Y."/>
            <person name="Takahashi Y."/>
            <person name="Nakagawa K."/>
            <person name="Okumura K."/>
            <person name="Nagase T."/>
            <person name="Nomura N."/>
            <person name="Kikuchi H."/>
            <person name="Masuho Y."/>
            <person name="Yamashita R."/>
            <person name="Nakai K."/>
            <person name="Yada T."/>
            <person name="Nakamura Y."/>
            <person name="Ohara O."/>
            <person name="Isogai T."/>
            <person name="Sugano S."/>
        </authorList>
    </citation>
    <scope>NUCLEOTIDE SEQUENCE [LARGE SCALE MRNA] (ISOFORMS 1 AND 3)</scope>
    <source>
        <tissue>Adipose tissue</tissue>
        <tissue>Thyroid</tissue>
        <tissue>Uterus</tissue>
    </source>
</reference>
<reference key="3">
    <citation type="journal article" date="2007" name="BMC Genomics">
        <title>The full-ORF clone resource of the German cDNA consortium.</title>
        <authorList>
            <person name="Bechtel S."/>
            <person name="Rosenfelder H."/>
            <person name="Duda A."/>
            <person name="Schmidt C.P."/>
            <person name="Ernst U."/>
            <person name="Wellenreuther R."/>
            <person name="Mehrle A."/>
            <person name="Schuster C."/>
            <person name="Bahr A."/>
            <person name="Bloecker H."/>
            <person name="Heubner D."/>
            <person name="Hoerlein A."/>
            <person name="Michel G."/>
            <person name="Wedler H."/>
            <person name="Koehrer K."/>
            <person name="Ottenwaelder B."/>
            <person name="Poustka A."/>
            <person name="Wiemann S."/>
            <person name="Schupp I."/>
        </authorList>
    </citation>
    <scope>NUCLEOTIDE SEQUENCE [LARGE SCALE MRNA] (ISOFORM 1)</scope>
    <source>
        <tissue>Amygdala</tissue>
    </source>
</reference>
<reference key="4">
    <citation type="journal article" date="2004" name="Genome Res.">
        <title>The status, quality, and expansion of the NIH full-length cDNA project: the Mammalian Gene Collection (MGC).</title>
        <authorList>
            <consortium name="The MGC Project Team"/>
        </authorList>
    </citation>
    <scope>NUCLEOTIDE SEQUENCE [LARGE SCALE MRNA] (ISOFORMS 2 AND 4)</scope>
    <source>
        <tissue>Brain</tissue>
        <tissue>Lung</tissue>
    </source>
</reference>
<reference key="5">
    <citation type="journal article" date="2008" name="Biochem. J.">
        <title>The IRAK-catalysed activation of the E3 ligase function of Pellino isoforms induces the Lys63-linked polyubiquitination of IRAK1.</title>
        <authorList>
            <person name="Ordureau A."/>
            <person name="Smith H."/>
            <person name="Windheim M."/>
            <person name="Peggie M."/>
            <person name="Carrick E."/>
            <person name="Morrice N."/>
            <person name="Cohen P."/>
        </authorList>
    </citation>
    <scope>PHOSPHORYLATION BY IRAK1</scope>
</reference>
<reference key="6">
    <citation type="journal article" date="2007" name="J. Biol. Chem.">
        <title>Kinase-active interleukin-1 receptor-associated kinases promote polyubiquitination and degradation of the Pellino family: direct evidence for PELLINO proteins being ubiquitin-protein isopeptide ligases.</title>
        <authorList>
            <person name="Butler M.P."/>
            <person name="Hanly J.A."/>
            <person name="Moynagh P.N."/>
        </authorList>
    </citation>
    <scope>FUNCTION</scope>
    <scope>CATALYTIC ACTIVITY</scope>
    <scope>PATHWAY</scope>
</reference>
<reference key="7">
    <citation type="journal article" date="2013" name="J. Proteome Res.">
        <title>Toward a comprehensive characterization of a human cancer cell phosphoproteome.</title>
        <authorList>
            <person name="Zhou H."/>
            <person name="Di Palma S."/>
            <person name="Preisinger C."/>
            <person name="Peng M."/>
            <person name="Polat A.N."/>
            <person name="Heck A.J."/>
            <person name="Mohammed S."/>
        </authorList>
    </citation>
    <scope>PHOSPHORYLATION [LARGE SCALE ANALYSIS] AT SER-11</scope>
    <scope>IDENTIFICATION BY MASS SPECTROMETRY [LARGE SCALE ANALYSIS]</scope>
    <source>
        <tissue>Cervix carcinoma</tissue>
    </source>
</reference>
<proteinExistence type="evidence at protein level"/>
<feature type="chain" id="PRO_0000194176" description="E3 ubiquitin-protein ligase pellino homolog 3">
    <location>
        <begin position="1"/>
        <end position="469"/>
    </location>
</feature>
<feature type="region of interest" description="Disordered" evidence="2">
    <location>
        <begin position="1"/>
        <end position="39"/>
    </location>
</feature>
<feature type="modified residue" description="Phosphoserine" evidence="11">
    <location>
        <position position="11"/>
    </location>
</feature>
<feature type="splice variant" id="VSP_008639" description="In isoform 3." evidence="7">
    <location>
        <begin position="48"/>
        <end position="110"/>
    </location>
</feature>
<feature type="splice variant" id="VSP_008640" description="In isoform 2." evidence="6 8">
    <location>
        <begin position="52"/>
        <end position="75"/>
    </location>
</feature>
<feature type="splice variant" id="VSP_008641" description="In isoform 4." evidence="8">
    <original>ENESNVLQDGSLIDLCGATLLWRTPAGLLRAPTLKQLEAQRQEANAARPQ</original>
    <variation>GGPLHSPPLSLPGPHKLPIPLPKPGDDLQSFCPREPQQAPYQGIPGPGGS</variation>
    <location>
        <begin position="282"/>
        <end position="331"/>
    </location>
</feature>
<feature type="splice variant" id="VSP_008642" description="In isoform 4." evidence="8">
    <location>
        <begin position="332"/>
        <end position="469"/>
    </location>
</feature>
<feature type="sequence variant" id="VAR_061502" description="In dbSNP:rs34989499.">
    <original>V</original>
    <variation>M</variation>
    <location>
        <position position="287"/>
    </location>
</feature>
<feature type="sequence conflict" description="In Ref. 2; BAB85015." evidence="9" ref="2">
    <original>H</original>
    <variation>L</variation>
    <location>
        <position position="73"/>
    </location>
</feature>
<feature type="sequence conflict" description="In Ref. 2; BAB85015." evidence="9" ref="2">
    <original>H</original>
    <variation>L</variation>
    <location>
        <position position="109"/>
    </location>
</feature>
<comment type="function">
    <text evidence="1 3 4">E3 ubiquitin ligase catalyzing the covalent attachment of ubiquitin moieties onto substrate proteins (PubMed:12874243, PubMed:17675297). Involved in the TLR and IL-1 signaling pathways via interaction with the complex containing IRAK kinases and TRAF6 (PubMed:12874243). Mediates 'Lys-63'-linked polyubiquitination of IRAK1 (PubMed:12874243). Can activate AP1/JUN and ELK1 (PubMed:12874243). Acts as a regulator of innate immunity by mediating 'Lys-63'-linked polyubiquitination of RIPK2 downstream of NOD1 and NOD2, thereby transforming RIPK2 into a scaffolding protein for downstream effectors, ultimately leading to activation of the NF-kappa-B and MAP kinases signaling (By similarity). Catalyzes 'Lys-63'-linked polyubiquitination of RIPK2 in parallel of XIAP (By similarity).</text>
</comment>
<comment type="catalytic activity">
    <reaction evidence="3 4">
        <text>S-ubiquitinyl-[E2 ubiquitin-conjugating enzyme]-L-cysteine + [acceptor protein]-L-lysine = [E2 ubiquitin-conjugating enzyme]-L-cysteine + N(6)-ubiquitinyl-[acceptor protein]-L-lysine.</text>
        <dbReference type="EC" id="2.3.2.27"/>
    </reaction>
</comment>
<comment type="pathway">
    <text evidence="3 4">Protein modification; protein ubiquitination.</text>
</comment>
<comment type="subunit">
    <text evidence="3">Interacts with TRAF6, MAP3K14 and MAP3K7.</text>
</comment>
<comment type="interaction">
    <interactant intactId="EBI-448457">
        <id>Q8N2H9</id>
    </interactant>
    <interactant intactId="EBI-79893">
        <id>Q92569</id>
        <label>PIK3R3</label>
    </interactant>
    <organismsDiffer>false</organismsDiffer>
    <experiments>3</experiments>
</comment>
<comment type="interaction">
    <interactant intactId="EBI-448472">
        <id>Q8N2H9-2</id>
    </interactant>
    <interactant intactId="EBI-358664">
        <id>P51617</id>
        <label>IRAK1</label>
    </interactant>
    <organismsDiffer>false</organismsDiffer>
    <experiments>2</experiments>
</comment>
<comment type="interaction">
    <interactant intactId="EBI-25852006">
        <id>Q8N2H9-4</id>
    </interactant>
    <interactant intactId="EBI-1054228">
        <id>P41091</id>
        <label>EIF2S3</label>
    </interactant>
    <organismsDiffer>false</organismsDiffer>
    <experiments>3</experiments>
</comment>
<comment type="interaction">
    <interactant intactId="EBI-25852006">
        <id>Q8N2H9-4</id>
    </interactant>
    <interactant intactId="EBI-25852368">
        <id>O75460-2</id>
        <label>ERN1</label>
    </interactant>
    <organismsDiffer>false</organismsDiffer>
    <experiments>3</experiments>
</comment>
<comment type="interaction">
    <interactant intactId="EBI-25852006">
        <id>Q8N2H9-4</id>
    </interactant>
    <interactant intactId="EBI-10226858">
        <id>Q0VDC6</id>
        <label>FKBP1A</label>
    </interactant>
    <organismsDiffer>false</organismsDiffer>
    <experiments>3</experiments>
</comment>
<comment type="interaction">
    <interactant intactId="EBI-25852006">
        <id>Q8N2H9-4</id>
    </interactant>
    <interactant intactId="EBI-356991">
        <id>P54652</id>
        <label>HSPA2</label>
    </interactant>
    <organismsDiffer>false</organismsDiffer>
    <experiments>3</experiments>
</comment>
<comment type="interaction">
    <interactant intactId="EBI-25852006">
        <id>Q8N2H9-4</id>
    </interactant>
    <interactant intactId="EBI-1053431">
        <id>P49591</id>
        <label>SARS1</label>
    </interactant>
    <organismsDiffer>false</organismsDiffer>
    <experiments>3</experiments>
</comment>
<comment type="alternative products">
    <event type="alternative splicing"/>
    <isoform>
        <id>Q8N2H9-1</id>
        <name>1</name>
        <name evidence="6">Alpha</name>
        <name evidence="6">A</name>
        <sequence type="displayed"/>
    </isoform>
    <isoform>
        <id>Q8N2H9-2</id>
        <name>2</name>
        <name evidence="6">Beta</name>
        <name evidence="6">B</name>
        <sequence type="described" ref="VSP_008640"/>
    </isoform>
    <isoform>
        <id>Q8N2H9-3</id>
        <name>3</name>
        <sequence type="described" ref="VSP_008639"/>
    </isoform>
    <isoform>
        <id>Q8N2H9-4</id>
        <name>4</name>
        <sequence type="described" ref="VSP_008641 VSP_008642"/>
    </isoform>
</comment>
<comment type="tissue specificity">
    <text evidence="3">Highly expressed in brain, heart and testis, and at lower level in kidney, liver, lung, placenta, small intestine, spleen and stomach. Isoform 1 is not expressed in lung.</text>
</comment>
<comment type="PTM">
    <text evidence="5">Phosphorylated by IRAK1 enhancing its E3 ligase activity.</text>
</comment>
<comment type="similarity">
    <text evidence="9">Belongs to the pellino family.</text>
</comment>
<comment type="sequence caution" evidence="9">
    <conflict type="erroneous initiation">
        <sequence resource="EMBL-CDS" id="BAC11499"/>
    </conflict>
</comment>
<dbReference type="EC" id="2.3.2.27" evidence="3 4"/>
<dbReference type="EMBL" id="AF487456">
    <property type="protein sequence ID" value="AAO49465.1"/>
    <property type="molecule type" value="mRNA"/>
</dbReference>
<dbReference type="EMBL" id="AF487457">
    <property type="protein sequence ID" value="AAO49466.1"/>
    <property type="molecule type" value="mRNA"/>
</dbReference>
<dbReference type="EMBL" id="AK074201">
    <property type="protein sequence ID" value="BAB85015.1"/>
    <property type="molecule type" value="mRNA"/>
</dbReference>
<dbReference type="EMBL" id="AK075253">
    <property type="protein sequence ID" value="BAC11499.1"/>
    <property type="status" value="ALT_INIT"/>
    <property type="molecule type" value="mRNA"/>
</dbReference>
<dbReference type="EMBL" id="AK094060">
    <property type="protein sequence ID" value="BAC04275.1"/>
    <property type="molecule type" value="mRNA"/>
</dbReference>
<dbReference type="EMBL" id="AL834395">
    <property type="protein sequence ID" value="CAD39057.1"/>
    <property type="molecule type" value="mRNA"/>
</dbReference>
<dbReference type="EMBL" id="BC021256">
    <property type="protein sequence ID" value="AAH21256.1"/>
    <property type="molecule type" value="mRNA"/>
</dbReference>
<dbReference type="EMBL" id="BC025723">
    <property type="protein sequence ID" value="AAH25723.1"/>
    <property type="molecule type" value="mRNA"/>
</dbReference>
<dbReference type="CCDS" id="CCDS31615.1">
    <molecule id="Q8N2H9-1"/>
</dbReference>
<dbReference type="CCDS" id="CCDS41675.1">
    <molecule id="Q8N2H9-2"/>
</dbReference>
<dbReference type="CCDS" id="CCDS73328.1">
    <molecule id="Q8N2H9-3"/>
</dbReference>
<dbReference type="RefSeq" id="NP_001091980.1">
    <molecule id="Q8N2H9-2"/>
    <property type="nucleotide sequence ID" value="NM_001098510.2"/>
</dbReference>
<dbReference type="RefSeq" id="NP_001230064.1">
    <molecule id="Q8N2H9-3"/>
    <property type="nucleotide sequence ID" value="NM_001243135.2"/>
</dbReference>
<dbReference type="RefSeq" id="NP_001230065.1">
    <property type="nucleotide sequence ID" value="NM_001243136.1"/>
</dbReference>
<dbReference type="RefSeq" id="NP_659502.2">
    <molecule id="Q8N2H9-1"/>
    <property type="nucleotide sequence ID" value="NM_145065.3"/>
</dbReference>
<dbReference type="RefSeq" id="XP_011543186.1">
    <molecule id="Q8N2H9-1"/>
    <property type="nucleotide sequence ID" value="XM_011544884.3"/>
</dbReference>
<dbReference type="RefSeq" id="XP_016872954.1">
    <property type="nucleotide sequence ID" value="XM_017017465.1"/>
</dbReference>
<dbReference type="RefSeq" id="XP_047282659.1">
    <molecule id="Q8N2H9-2"/>
    <property type="nucleotide sequence ID" value="XM_047426703.1"/>
</dbReference>
<dbReference type="RefSeq" id="XP_054224257.1">
    <molecule id="Q8N2H9-1"/>
    <property type="nucleotide sequence ID" value="XM_054368282.1"/>
</dbReference>
<dbReference type="RefSeq" id="XP_054224258.1">
    <molecule id="Q8N2H9-2"/>
    <property type="nucleotide sequence ID" value="XM_054368283.1"/>
</dbReference>
<dbReference type="SMR" id="Q8N2H9"/>
<dbReference type="BioGRID" id="128900">
    <property type="interactions" value="47"/>
</dbReference>
<dbReference type="DIP" id="DIP-31770N"/>
<dbReference type="FunCoup" id="Q8N2H9">
    <property type="interactions" value="758"/>
</dbReference>
<dbReference type="IntAct" id="Q8N2H9">
    <property type="interactions" value="25"/>
</dbReference>
<dbReference type="MINT" id="Q8N2H9"/>
<dbReference type="STRING" id="9606.ENSP00000322532"/>
<dbReference type="iPTMnet" id="Q8N2H9"/>
<dbReference type="PhosphoSitePlus" id="Q8N2H9"/>
<dbReference type="BioMuta" id="PELI3"/>
<dbReference type="DMDM" id="37999712"/>
<dbReference type="MassIVE" id="Q8N2H9"/>
<dbReference type="PaxDb" id="9606-ENSP00000322532"/>
<dbReference type="PeptideAtlas" id="Q8N2H9"/>
<dbReference type="ProteomicsDB" id="71701">
    <molecule id="Q8N2H9-1"/>
</dbReference>
<dbReference type="ProteomicsDB" id="71702">
    <molecule id="Q8N2H9-2"/>
</dbReference>
<dbReference type="ProteomicsDB" id="71703">
    <molecule id="Q8N2H9-3"/>
</dbReference>
<dbReference type="ProteomicsDB" id="71704">
    <molecule id="Q8N2H9-4"/>
</dbReference>
<dbReference type="Antibodypedia" id="30168">
    <property type="antibodies" value="132 antibodies from 21 providers"/>
</dbReference>
<dbReference type="DNASU" id="246330"/>
<dbReference type="Ensembl" id="ENST00000320740.12">
    <molecule id="Q8N2H9-1"/>
    <property type="protein sequence ID" value="ENSP00000322532.7"/>
    <property type="gene ID" value="ENSG00000174516.15"/>
</dbReference>
<dbReference type="Ensembl" id="ENST00000349459.10">
    <molecule id="Q8N2H9-2"/>
    <property type="protein sequence ID" value="ENSP00000309848.8"/>
    <property type="gene ID" value="ENSG00000174516.15"/>
</dbReference>
<dbReference type="Ensembl" id="ENST00000524466.5">
    <molecule id="Q8N2H9-4"/>
    <property type="protein sequence ID" value="ENSP00000434677.1"/>
    <property type="gene ID" value="ENSG00000174516.15"/>
</dbReference>
<dbReference type="Ensembl" id="ENST00000618547.4">
    <molecule id="Q8N2H9-3"/>
    <property type="protein sequence ID" value="ENSP00000484220.1"/>
    <property type="gene ID" value="ENSG00000174516.15"/>
</dbReference>
<dbReference type="GeneID" id="246330"/>
<dbReference type="KEGG" id="hsa:246330"/>
<dbReference type="MANE-Select" id="ENST00000320740.12">
    <property type="protein sequence ID" value="ENSP00000322532.7"/>
    <property type="RefSeq nucleotide sequence ID" value="NM_145065.3"/>
    <property type="RefSeq protein sequence ID" value="NP_659502.2"/>
</dbReference>
<dbReference type="UCSC" id="uc001oib.3">
    <molecule id="Q8N2H9-1"/>
    <property type="organism name" value="human"/>
</dbReference>
<dbReference type="AGR" id="HGNC:30010"/>
<dbReference type="CTD" id="246330"/>
<dbReference type="DisGeNET" id="246330"/>
<dbReference type="GeneCards" id="PELI3"/>
<dbReference type="HGNC" id="HGNC:30010">
    <property type="gene designation" value="PELI3"/>
</dbReference>
<dbReference type="HPA" id="ENSG00000174516">
    <property type="expression patterns" value="Tissue enhanced (brain)"/>
</dbReference>
<dbReference type="MIM" id="609827">
    <property type="type" value="gene"/>
</dbReference>
<dbReference type="neXtProt" id="NX_Q8N2H9"/>
<dbReference type="OpenTargets" id="ENSG00000174516"/>
<dbReference type="PharmGKB" id="PA142671185"/>
<dbReference type="VEuPathDB" id="HostDB:ENSG00000174516"/>
<dbReference type="eggNOG" id="KOG3842">
    <property type="taxonomic scope" value="Eukaryota"/>
</dbReference>
<dbReference type="GeneTree" id="ENSGT00950000183050"/>
<dbReference type="HOGENOM" id="CLU_029221_0_0_1"/>
<dbReference type="InParanoid" id="Q8N2H9"/>
<dbReference type="OMA" id="VICERWP"/>
<dbReference type="OrthoDB" id="8801906at2759"/>
<dbReference type="PAN-GO" id="Q8N2H9">
    <property type="GO annotations" value="2 GO annotations based on evolutionary models"/>
</dbReference>
<dbReference type="PhylomeDB" id="Q8N2H9"/>
<dbReference type="TreeFam" id="TF314338"/>
<dbReference type="PathwayCommons" id="Q8N2H9"/>
<dbReference type="Reactome" id="R-HSA-9020702">
    <property type="pathway name" value="Interleukin-1 signaling"/>
</dbReference>
<dbReference type="Reactome" id="R-HSA-937039">
    <property type="pathway name" value="IRAK1 recruits IKK complex"/>
</dbReference>
<dbReference type="Reactome" id="R-HSA-975144">
    <property type="pathway name" value="IRAK1 recruits IKK complex upon TLR7/8 or 9 stimulation"/>
</dbReference>
<dbReference type="SignaLink" id="Q8N2H9"/>
<dbReference type="SIGNOR" id="Q8N2H9"/>
<dbReference type="UniPathway" id="UPA00143"/>
<dbReference type="BioGRID-ORCS" id="246330">
    <property type="hits" value="17 hits in 1187 CRISPR screens"/>
</dbReference>
<dbReference type="ChiTaRS" id="PELI3">
    <property type="organism name" value="human"/>
</dbReference>
<dbReference type="GenomeRNAi" id="246330"/>
<dbReference type="Pharos" id="Q8N2H9">
    <property type="development level" value="Tbio"/>
</dbReference>
<dbReference type="PRO" id="PR:Q8N2H9"/>
<dbReference type="Proteomes" id="UP000005640">
    <property type="component" value="Chromosome 11"/>
</dbReference>
<dbReference type="RNAct" id="Q8N2H9">
    <property type="molecule type" value="protein"/>
</dbReference>
<dbReference type="Bgee" id="ENSG00000174516">
    <property type="expression patterns" value="Expressed in Brodmann (1909) area 23 and 186 other cell types or tissues"/>
</dbReference>
<dbReference type="ExpressionAtlas" id="Q8N2H9">
    <property type="expression patterns" value="baseline and differential"/>
</dbReference>
<dbReference type="GO" id="GO:0005829">
    <property type="term" value="C:cytosol"/>
    <property type="evidence" value="ECO:0000304"/>
    <property type="project" value="Reactome"/>
</dbReference>
<dbReference type="GO" id="GO:0061630">
    <property type="term" value="F:ubiquitin protein ligase activity"/>
    <property type="evidence" value="ECO:0000318"/>
    <property type="project" value="GO_Central"/>
</dbReference>
<dbReference type="GO" id="GO:0045087">
    <property type="term" value="P:innate immune response"/>
    <property type="evidence" value="ECO:0007669"/>
    <property type="project" value="UniProtKB-KW"/>
</dbReference>
<dbReference type="GO" id="GO:2001237">
    <property type="term" value="P:negative regulation of extrinsic apoptotic signaling pathway"/>
    <property type="evidence" value="ECO:0000315"/>
    <property type="project" value="MGI"/>
</dbReference>
<dbReference type="GO" id="GO:0010804">
    <property type="term" value="P:negative regulation of tumor necrosis factor-mediated signaling pathway"/>
    <property type="evidence" value="ECO:0000315"/>
    <property type="project" value="MGI"/>
</dbReference>
<dbReference type="GO" id="GO:0070534">
    <property type="term" value="P:protein K63-linked ubiquitination"/>
    <property type="evidence" value="ECO:0000318"/>
    <property type="project" value="GO_Central"/>
</dbReference>
<dbReference type="GO" id="GO:0008592">
    <property type="term" value="P:regulation of Toll signaling pathway"/>
    <property type="evidence" value="ECO:0007669"/>
    <property type="project" value="InterPro"/>
</dbReference>
<dbReference type="InterPro" id="IPR006800">
    <property type="entry name" value="Pellino_fam"/>
</dbReference>
<dbReference type="InterPro" id="IPR048334">
    <property type="entry name" value="Pellino_FHA"/>
</dbReference>
<dbReference type="InterPro" id="IPR048335">
    <property type="entry name" value="Pellino_RING"/>
</dbReference>
<dbReference type="PANTHER" id="PTHR12098:SF9">
    <property type="entry name" value="E3 UBIQUITIN-PROTEIN LIGASE PELLINO HOMOLOG 3"/>
    <property type="match status" value="1"/>
</dbReference>
<dbReference type="PANTHER" id="PTHR12098">
    <property type="entry name" value="E3 UBIQUITIN-PROTEIN LIGASE PELLINO-RELATED"/>
    <property type="match status" value="1"/>
</dbReference>
<dbReference type="Pfam" id="PF04710">
    <property type="entry name" value="Pellino_FHA"/>
    <property type="match status" value="1"/>
</dbReference>
<dbReference type="Pfam" id="PF20723">
    <property type="entry name" value="Pellino_RING"/>
    <property type="match status" value="1"/>
</dbReference>
<dbReference type="PIRSF" id="PIRSF038886">
    <property type="entry name" value="Pellino"/>
    <property type="match status" value="1"/>
</dbReference>
<sequence>MVLEGNPEVGSPRTSDLQHRGNKGSCVLSSPGEDAQPGEEPIKYGELIVLGCCEEGGEETEAQRGEVTGPRAHSCYNGCLASGDKGRRRSRLALSRRSHANGVKPDVMHHISTPLVSKALSNRGQHSISYTLSRSHSVIVEYTHDSDTDMFQIGRSTENMIDFVVTDTSPGGGAAEGPSAQSTISRYACRILCDRRPPYTARIYAAGFDASSNIFLGERAAKWRTPDGLMDGLTTNGVLVMHPAGGFSEDSAPGVWREISVCGNVYTLRDSRSAQQRGKLVENESNVLQDGSLIDLCGATLLWRTPAGLLRAPTLKQLEAQRQEANAARPQCPVGLSTLAFPSPARGRTAPDKQQPWVYVRCGHVHGYHGWGCRRERGPQERECPLCRLVGPYVPLWLGQEAGLCLDPGPPSHAFAPCGHVCSEKTARYWAQTPLPHGTHAFHAACPFCGAWLTGEHGCVRLIFQGPLD</sequence>
<protein>
    <recommendedName>
        <fullName evidence="9">E3 ubiquitin-protein ligase pellino homolog 3</fullName>
        <shortName evidence="6">Pellino-3</shortName>
        <ecNumber evidence="3 4">2.3.2.27</ecNumber>
    </recommendedName>
</protein>
<evidence type="ECO:0000250" key="1">
    <source>
        <dbReference type="UniProtKB" id="Q8BXR6"/>
    </source>
</evidence>
<evidence type="ECO:0000256" key="2">
    <source>
        <dbReference type="SAM" id="MobiDB-lite"/>
    </source>
</evidence>
<evidence type="ECO:0000269" key="3">
    <source>
    </source>
</evidence>
<evidence type="ECO:0000269" key="4">
    <source>
    </source>
</evidence>
<evidence type="ECO:0000269" key="5">
    <source>
    </source>
</evidence>
<evidence type="ECO:0000303" key="6">
    <source>
    </source>
</evidence>
<evidence type="ECO:0000303" key="7">
    <source>
    </source>
</evidence>
<evidence type="ECO:0000303" key="8">
    <source>
    </source>
</evidence>
<evidence type="ECO:0000305" key="9"/>
<evidence type="ECO:0000312" key="10">
    <source>
        <dbReference type="HGNC" id="HGNC:30010"/>
    </source>
</evidence>
<evidence type="ECO:0007744" key="11">
    <source>
    </source>
</evidence>
<accession>Q8N2H9</accession>
<accession>Q8N3E1</accession>
<accession>Q8N9Q6</accession>
<accession>Q8TAW7</accession>
<accession>Q8TED5</accession>